<keyword id="KW-0687">Ribonucleoprotein</keyword>
<keyword id="KW-0689">Ribosomal protein</keyword>
<keyword id="KW-0694">RNA-binding</keyword>
<keyword id="KW-0699">rRNA-binding</keyword>
<reference key="1">
    <citation type="journal article" date="2004" name="Proc. Natl. Acad. Sci. U.S.A.">
        <title>Complete genomes of two clinical Staphylococcus aureus strains: evidence for the rapid evolution of virulence and drug resistance.</title>
        <authorList>
            <person name="Holden M.T.G."/>
            <person name="Feil E.J."/>
            <person name="Lindsay J.A."/>
            <person name="Peacock S.J."/>
            <person name="Day N.P.J."/>
            <person name="Enright M.C."/>
            <person name="Foster T.J."/>
            <person name="Moore C.E."/>
            <person name="Hurst L."/>
            <person name="Atkin R."/>
            <person name="Barron A."/>
            <person name="Bason N."/>
            <person name="Bentley S.D."/>
            <person name="Chillingworth C."/>
            <person name="Chillingworth T."/>
            <person name="Churcher C."/>
            <person name="Clark L."/>
            <person name="Corton C."/>
            <person name="Cronin A."/>
            <person name="Doggett J."/>
            <person name="Dowd L."/>
            <person name="Feltwell T."/>
            <person name="Hance Z."/>
            <person name="Harris B."/>
            <person name="Hauser H."/>
            <person name="Holroyd S."/>
            <person name="Jagels K."/>
            <person name="James K.D."/>
            <person name="Lennard N."/>
            <person name="Line A."/>
            <person name="Mayes R."/>
            <person name="Moule S."/>
            <person name="Mungall K."/>
            <person name="Ormond D."/>
            <person name="Quail M.A."/>
            <person name="Rabbinowitsch E."/>
            <person name="Rutherford K.M."/>
            <person name="Sanders M."/>
            <person name="Sharp S."/>
            <person name="Simmonds M."/>
            <person name="Stevens K."/>
            <person name="Whitehead S."/>
            <person name="Barrell B.G."/>
            <person name="Spratt B.G."/>
            <person name="Parkhill J."/>
        </authorList>
    </citation>
    <scope>NUCLEOTIDE SEQUENCE [LARGE SCALE GENOMIC DNA]</scope>
    <source>
        <strain>MSSA476</strain>
    </source>
</reference>
<name>RL22_STAAS</name>
<gene>
    <name evidence="1" type="primary">rplV</name>
    <name type="ordered locus">SAS2136</name>
</gene>
<comment type="function">
    <text evidence="1">This protein binds specifically to 23S rRNA; its binding is stimulated by other ribosomal proteins, e.g. L4, L17, and L20. It is important during the early stages of 50S assembly. It makes multiple contacts with different domains of the 23S rRNA in the assembled 50S subunit and ribosome (By similarity).</text>
</comment>
<comment type="function">
    <text evidence="1">The globular domain of the protein is located near the polypeptide exit tunnel on the outside of the subunit, while an extended beta-hairpin is found that lines the wall of the exit tunnel in the center of the 70S ribosome.</text>
</comment>
<comment type="subunit">
    <text evidence="1">Part of the 50S ribosomal subunit.</text>
</comment>
<comment type="similarity">
    <text evidence="1">Belongs to the universal ribosomal protein uL22 family.</text>
</comment>
<proteinExistence type="inferred from homology"/>
<organism>
    <name type="scientific">Staphylococcus aureus (strain MSSA476)</name>
    <dbReference type="NCBI Taxonomy" id="282459"/>
    <lineage>
        <taxon>Bacteria</taxon>
        <taxon>Bacillati</taxon>
        <taxon>Bacillota</taxon>
        <taxon>Bacilli</taxon>
        <taxon>Bacillales</taxon>
        <taxon>Staphylococcaceae</taxon>
        <taxon>Staphylococcus</taxon>
    </lineage>
</organism>
<sequence length="117" mass="12835">MEAKAVARTIRIAPRKVRLVLDLIRGKNAAEAIAILKLTNKASSPVIEKVLMSALANAEHNYDMNTDELVVKEAYANEGPTLKRFRPRAQGRASAINKRTSHITIVVSDGKEEAKEA</sequence>
<evidence type="ECO:0000255" key="1">
    <source>
        <dbReference type="HAMAP-Rule" id="MF_01331"/>
    </source>
</evidence>
<evidence type="ECO:0000305" key="2"/>
<dbReference type="EMBL" id="BX571857">
    <property type="protein sequence ID" value="CAG43947.1"/>
    <property type="molecule type" value="Genomic_DNA"/>
</dbReference>
<dbReference type="RefSeq" id="WP_000387527.1">
    <property type="nucleotide sequence ID" value="NC_002953.3"/>
</dbReference>
<dbReference type="SMR" id="Q6G776"/>
<dbReference type="GeneID" id="98346557"/>
<dbReference type="KEGG" id="sas:SAS2136"/>
<dbReference type="HOGENOM" id="CLU_083987_3_3_9"/>
<dbReference type="GO" id="GO:0022625">
    <property type="term" value="C:cytosolic large ribosomal subunit"/>
    <property type="evidence" value="ECO:0007669"/>
    <property type="project" value="TreeGrafter"/>
</dbReference>
<dbReference type="GO" id="GO:0019843">
    <property type="term" value="F:rRNA binding"/>
    <property type="evidence" value="ECO:0007669"/>
    <property type="project" value="UniProtKB-UniRule"/>
</dbReference>
<dbReference type="GO" id="GO:0003735">
    <property type="term" value="F:structural constituent of ribosome"/>
    <property type="evidence" value="ECO:0007669"/>
    <property type="project" value="InterPro"/>
</dbReference>
<dbReference type="GO" id="GO:0006412">
    <property type="term" value="P:translation"/>
    <property type="evidence" value="ECO:0007669"/>
    <property type="project" value="UniProtKB-UniRule"/>
</dbReference>
<dbReference type="CDD" id="cd00336">
    <property type="entry name" value="Ribosomal_L22"/>
    <property type="match status" value="1"/>
</dbReference>
<dbReference type="FunFam" id="3.90.470.10:FF:000001">
    <property type="entry name" value="50S ribosomal protein L22"/>
    <property type="match status" value="1"/>
</dbReference>
<dbReference type="Gene3D" id="3.90.470.10">
    <property type="entry name" value="Ribosomal protein L22/L17"/>
    <property type="match status" value="1"/>
</dbReference>
<dbReference type="HAMAP" id="MF_01331_B">
    <property type="entry name" value="Ribosomal_uL22_B"/>
    <property type="match status" value="1"/>
</dbReference>
<dbReference type="InterPro" id="IPR001063">
    <property type="entry name" value="Ribosomal_uL22"/>
</dbReference>
<dbReference type="InterPro" id="IPR005727">
    <property type="entry name" value="Ribosomal_uL22_bac/chlpt-type"/>
</dbReference>
<dbReference type="InterPro" id="IPR047867">
    <property type="entry name" value="Ribosomal_uL22_bac/org-type"/>
</dbReference>
<dbReference type="InterPro" id="IPR018260">
    <property type="entry name" value="Ribosomal_uL22_CS"/>
</dbReference>
<dbReference type="InterPro" id="IPR036394">
    <property type="entry name" value="Ribosomal_uL22_sf"/>
</dbReference>
<dbReference type="NCBIfam" id="TIGR01044">
    <property type="entry name" value="rplV_bact"/>
    <property type="match status" value="1"/>
</dbReference>
<dbReference type="PANTHER" id="PTHR13501">
    <property type="entry name" value="CHLOROPLAST 50S RIBOSOMAL PROTEIN L22-RELATED"/>
    <property type="match status" value="1"/>
</dbReference>
<dbReference type="PANTHER" id="PTHR13501:SF8">
    <property type="entry name" value="LARGE RIBOSOMAL SUBUNIT PROTEIN UL22M"/>
    <property type="match status" value="1"/>
</dbReference>
<dbReference type="Pfam" id="PF00237">
    <property type="entry name" value="Ribosomal_L22"/>
    <property type="match status" value="1"/>
</dbReference>
<dbReference type="SUPFAM" id="SSF54843">
    <property type="entry name" value="Ribosomal protein L22"/>
    <property type="match status" value="1"/>
</dbReference>
<dbReference type="PROSITE" id="PS00464">
    <property type="entry name" value="RIBOSOMAL_L22"/>
    <property type="match status" value="1"/>
</dbReference>
<feature type="chain" id="PRO_0000125225" description="Large ribosomal subunit protein uL22">
    <location>
        <begin position="1"/>
        <end position="117"/>
    </location>
</feature>
<protein>
    <recommendedName>
        <fullName evidence="1">Large ribosomal subunit protein uL22</fullName>
    </recommendedName>
    <alternativeName>
        <fullName evidence="2">50S ribosomal protein L22</fullName>
    </alternativeName>
</protein>
<accession>Q6G776</accession>